<comment type="function">
    <text evidence="1">Encapsidates the negative strand viral RNA, protecting it from nucleases. The encapsidated genomic RNA is termed the ribonucleoprotein (RNP) and serves as template for transcription and replication. The RNP needs to be localized in the host nucleus to start an infectious cycle, but is too large to diffuse through the nuclear pore complex. NP comprises at least 2 nuclear localization signals that are responsible for the active RNP import into the nucleus through cellular importin alpha/beta pathway. Later in the infection, nclear export of RNPs are mediated through viral proteins NEP interacting with M1 which binds nucleoproteins. It is possible that nucleoprotein binds directly host exportin-1/XPO1 and plays an active role in RNPs nuclear export. M1 interaction with RNP seems to hide nucleoprotein's nuclear localization signals. Soon after a virion infects a new cell, M1 dissociates from the RNP under acidification of the virion driven by M2 protein. Dissociation of M1 from RNP unmasks nucleoprotein's nuclear localization signals, targeting the RNP to the nucleus.</text>
</comment>
<comment type="subunit">
    <text evidence="1">Homomultimerizes to form the nucleocapsid. May bind host exportin-1/XPO1. Binds to viral genomic RNA. Protein-RNA contacts are mediated by a combination of electrostatic interactions between positively charged residues and the phosphate backbone and planar interactions between aromatic side chains and bases.</text>
</comment>
<comment type="subcellular location">
    <subcellularLocation>
        <location evidence="1">Virion</location>
    </subcellularLocation>
    <subcellularLocation>
        <location evidence="1">Host nucleus</location>
    </subcellularLocation>
</comment>
<comment type="PTM">
    <text evidence="1">Late in virus-infected cells, may be cleaved from a 56-kDa protein to a 53-kDa protein by a cellular caspase. This cleavage might be a marker for the onset of apoptosis in infected cells or have a specific function in virus host interaction.</text>
</comment>
<comment type="similarity">
    <text evidence="1">Belongs to the influenza viruses nucleoprotein family.</text>
</comment>
<dbReference type="EMBL" id="M22579">
    <property type="protein sequence ID" value="AAA43667.1"/>
    <property type="molecule type" value="Genomic_RNA"/>
</dbReference>
<dbReference type="SMR" id="P16985"/>
<dbReference type="GO" id="GO:0019029">
    <property type="term" value="C:helical viral capsid"/>
    <property type="evidence" value="ECO:0007669"/>
    <property type="project" value="UniProtKB-UniRule"/>
</dbReference>
<dbReference type="GO" id="GO:0043657">
    <property type="term" value="C:host cell"/>
    <property type="evidence" value="ECO:0007669"/>
    <property type="project" value="GOC"/>
</dbReference>
<dbReference type="GO" id="GO:0042025">
    <property type="term" value="C:host cell nucleus"/>
    <property type="evidence" value="ECO:0007669"/>
    <property type="project" value="UniProtKB-SubCell"/>
</dbReference>
<dbReference type="GO" id="GO:1990904">
    <property type="term" value="C:ribonucleoprotein complex"/>
    <property type="evidence" value="ECO:0007669"/>
    <property type="project" value="UniProtKB-KW"/>
</dbReference>
<dbReference type="GO" id="GO:0019013">
    <property type="term" value="C:viral nucleocapsid"/>
    <property type="evidence" value="ECO:0007669"/>
    <property type="project" value="UniProtKB-UniRule"/>
</dbReference>
<dbReference type="GO" id="GO:0003723">
    <property type="term" value="F:RNA binding"/>
    <property type="evidence" value="ECO:0007669"/>
    <property type="project" value="UniProtKB-UniRule"/>
</dbReference>
<dbReference type="GO" id="GO:0005198">
    <property type="term" value="F:structural molecule activity"/>
    <property type="evidence" value="ECO:0007669"/>
    <property type="project" value="UniProtKB-UniRule"/>
</dbReference>
<dbReference type="GO" id="GO:0046718">
    <property type="term" value="P:symbiont entry into host cell"/>
    <property type="evidence" value="ECO:0007669"/>
    <property type="project" value="UniProtKB-KW"/>
</dbReference>
<dbReference type="GO" id="GO:0075732">
    <property type="term" value="P:viral penetration into host nucleus"/>
    <property type="evidence" value="ECO:0007669"/>
    <property type="project" value="UniProtKB-UniRule"/>
</dbReference>
<dbReference type="HAMAP" id="MF_04070">
    <property type="entry name" value="INFV_NCAP"/>
    <property type="match status" value="1"/>
</dbReference>
<dbReference type="InterPro" id="IPR002141">
    <property type="entry name" value="Flu_NP"/>
</dbReference>
<dbReference type="Pfam" id="PF00506">
    <property type="entry name" value="Flu_NP"/>
    <property type="match status" value="1"/>
</dbReference>
<dbReference type="SUPFAM" id="SSF161003">
    <property type="entry name" value="flu NP-like"/>
    <property type="match status" value="1"/>
</dbReference>
<feature type="chain" id="PRO_0000079119" description="Nucleoprotein">
    <location>
        <begin position="1"/>
        <end position="498"/>
    </location>
</feature>
<feature type="region of interest" description="Disordered" evidence="2">
    <location>
        <begin position="1"/>
        <end position="21"/>
    </location>
</feature>
<feature type="short sequence motif" description="Unconventional nuclear localization signal" evidence="1">
    <location>
        <begin position="1"/>
        <end position="18"/>
    </location>
</feature>
<feature type="short sequence motif" description="Bipartite nuclear localization signal" evidence="1">
    <location>
        <begin position="198"/>
        <end position="216"/>
    </location>
</feature>
<protein>
    <recommendedName>
        <fullName evidence="1">Nucleoprotein</fullName>
    </recommendedName>
    <alternativeName>
        <fullName evidence="1">Nucleocapsid protein</fullName>
        <shortName evidence="1">Protein N</shortName>
    </alternativeName>
</protein>
<accession>P16985</accession>
<organismHost>
    <name type="scientific">Aves</name>
    <dbReference type="NCBI Taxonomy" id="8782"/>
</organismHost>
<organismHost>
    <name type="scientific">Homo sapiens</name>
    <name type="common">Human</name>
    <dbReference type="NCBI Taxonomy" id="9606"/>
</organismHost>
<organismHost>
    <name type="scientific">Sus scrofa</name>
    <name type="common">Pig</name>
    <dbReference type="NCBI Taxonomy" id="9823"/>
</organismHost>
<gene>
    <name evidence="1" type="primary">NP</name>
</gene>
<evidence type="ECO:0000255" key="1">
    <source>
        <dbReference type="HAMAP-Rule" id="MF_04070"/>
    </source>
</evidence>
<evidence type="ECO:0000256" key="2">
    <source>
        <dbReference type="SAM" id="MobiDB-lite"/>
    </source>
</evidence>
<reference key="1">
    <citation type="journal article" date="1989" name="Virology">
        <title>Two subtypes of nucleoproteins (NP) of influenza A viruses.</title>
        <authorList>
            <person name="Gammelin M."/>
            <person name="Mandler J."/>
            <person name="Scholtissek C."/>
        </authorList>
    </citation>
    <scope>NUCLEOTIDE SEQUENCE [GENOMIC RNA]</scope>
</reference>
<organism>
    <name type="scientific">Influenza A virus (strain A/Swine/Germany/2/1981 H1N1)</name>
    <dbReference type="NCBI Taxonomy" id="11495"/>
    <lineage>
        <taxon>Viruses</taxon>
        <taxon>Riboviria</taxon>
        <taxon>Orthornavirae</taxon>
        <taxon>Negarnaviricota</taxon>
        <taxon>Polyploviricotina</taxon>
        <taxon>Insthoviricetes</taxon>
        <taxon>Articulavirales</taxon>
        <taxon>Orthomyxoviridae</taxon>
        <taxon>Alphainfluenzavirus</taxon>
        <taxon>Alphainfluenzavirus influenzae</taxon>
        <taxon>Influenza A virus</taxon>
    </lineage>
</organism>
<sequence length="498" mass="56171">MASQGTKRSYEQMETGGERQNATEIRASVGGMVGGIGRFYIQMCTELKLSDYEGRLIQNSITIERMVLSAFDERRNKYLEEHPSAGKDPKKTGGPIYRRRDGKWMRELILYDKEEIRRIWRQANNGEDATAGLTHLMIWHSNLNDATYQRTRALVRTGMDPRMCSLMQGSTLPRRSGAAGAAVKGVGTMVMELIRMIKRGINDRNFWRGENGRRTRIAYERMCNILKGKFQTAAQRAMMDQVRESRNPGNAEIEDLIFLARSALILRGSVAHKSCLPACVYGLVVASGYDFEREGYSLVGIDPFRLLQNSQVFSLIRPNENPAHKSQLVWMACHSAAFEDLRVSSFIRGTRVVPRGQLSTRGVQIASNENMETMDSSTLELRSKYWAIRTRSGGNTNQQRASAGQISVQPTFSVQRNLPFERATIMAAFTGNTEGRTSDMRTEIIRMMESARPEDVSFQGRGVFELSDEKATNPVVPSFDMSNEGSYFFGDNAEEYDN</sequence>
<keyword id="KW-0167">Capsid protein</keyword>
<keyword id="KW-1139">Helical capsid protein</keyword>
<keyword id="KW-1048">Host nucleus</keyword>
<keyword id="KW-0945">Host-virus interaction</keyword>
<keyword id="KW-0687">Ribonucleoprotein</keyword>
<keyword id="KW-0694">RNA-binding</keyword>
<keyword id="KW-0543">Viral nucleoprotein</keyword>
<keyword id="KW-1163">Viral penetration into host nucleus</keyword>
<keyword id="KW-0946">Virion</keyword>
<keyword id="KW-1160">Virus entry into host cell</keyword>
<proteinExistence type="inferred from homology"/>
<name>NCAP_I81A0</name>